<evidence type="ECO:0000255" key="1">
    <source>
        <dbReference type="HAMAP-Rule" id="MF_00105"/>
    </source>
</evidence>
<sequence>MSTEKTYPMTQEGKQKLENELEQLKTVRRKEVVERIKIARSFGDLSENSEYDAAKDEQAFVEGRITQLENMIRNAVIIKDTGEVSTVVTLGKTVTFKELPNGDEEAYTIVGSAEADPFEGRISNDSPIAKSLLGKQIGEKVTIQTPGGEMQVEIVSVK</sequence>
<name>GREA_BACCR</name>
<organism>
    <name type="scientific">Bacillus cereus (strain ATCC 14579 / DSM 31 / CCUG 7414 / JCM 2152 / NBRC 15305 / NCIMB 9373 / NCTC 2599 / NRRL B-3711)</name>
    <dbReference type="NCBI Taxonomy" id="226900"/>
    <lineage>
        <taxon>Bacteria</taxon>
        <taxon>Bacillati</taxon>
        <taxon>Bacillota</taxon>
        <taxon>Bacilli</taxon>
        <taxon>Bacillales</taxon>
        <taxon>Bacillaceae</taxon>
        <taxon>Bacillus</taxon>
        <taxon>Bacillus cereus group</taxon>
    </lineage>
</organism>
<proteinExistence type="inferred from homology"/>
<keyword id="KW-0175">Coiled coil</keyword>
<keyword id="KW-0238">DNA-binding</keyword>
<keyword id="KW-1185">Reference proteome</keyword>
<keyword id="KW-0804">Transcription</keyword>
<keyword id="KW-0805">Transcription regulation</keyword>
<dbReference type="EMBL" id="AE016877">
    <property type="protein sequence ID" value="AAP11287.1"/>
    <property type="molecule type" value="Genomic_DNA"/>
</dbReference>
<dbReference type="RefSeq" id="NP_834086.1">
    <property type="nucleotide sequence ID" value="NC_004722.1"/>
</dbReference>
<dbReference type="RefSeq" id="WP_000102591.1">
    <property type="nucleotide sequence ID" value="NZ_CP138336.1"/>
</dbReference>
<dbReference type="SMR" id="Q817Z6"/>
<dbReference type="STRING" id="226900.BC_4374"/>
<dbReference type="MetOSite" id="Q817Z6"/>
<dbReference type="GeneID" id="67468676"/>
<dbReference type="KEGG" id="bce:BC4374"/>
<dbReference type="PATRIC" id="fig|226900.8.peg.4524"/>
<dbReference type="HOGENOM" id="CLU_101379_2_1_9"/>
<dbReference type="Proteomes" id="UP000001417">
    <property type="component" value="Chromosome"/>
</dbReference>
<dbReference type="GO" id="GO:0003677">
    <property type="term" value="F:DNA binding"/>
    <property type="evidence" value="ECO:0007669"/>
    <property type="project" value="UniProtKB-UniRule"/>
</dbReference>
<dbReference type="GO" id="GO:0070063">
    <property type="term" value="F:RNA polymerase binding"/>
    <property type="evidence" value="ECO:0007669"/>
    <property type="project" value="InterPro"/>
</dbReference>
<dbReference type="GO" id="GO:0006354">
    <property type="term" value="P:DNA-templated transcription elongation"/>
    <property type="evidence" value="ECO:0000318"/>
    <property type="project" value="GO_Central"/>
</dbReference>
<dbReference type="GO" id="GO:0032784">
    <property type="term" value="P:regulation of DNA-templated transcription elongation"/>
    <property type="evidence" value="ECO:0007669"/>
    <property type="project" value="UniProtKB-UniRule"/>
</dbReference>
<dbReference type="FunFam" id="1.10.287.180:FF:000001">
    <property type="entry name" value="Transcription elongation factor GreA"/>
    <property type="match status" value="1"/>
</dbReference>
<dbReference type="FunFam" id="3.10.50.30:FF:000001">
    <property type="entry name" value="Transcription elongation factor GreA"/>
    <property type="match status" value="1"/>
</dbReference>
<dbReference type="Gene3D" id="3.10.50.30">
    <property type="entry name" value="Transcription elongation factor, GreA/GreB, C-terminal domain"/>
    <property type="match status" value="1"/>
</dbReference>
<dbReference type="Gene3D" id="1.10.287.180">
    <property type="entry name" value="Transcription elongation factor, GreA/GreB, N-terminal domain"/>
    <property type="match status" value="1"/>
</dbReference>
<dbReference type="HAMAP" id="MF_00105">
    <property type="entry name" value="GreA_GreB"/>
    <property type="match status" value="1"/>
</dbReference>
<dbReference type="InterPro" id="IPR036953">
    <property type="entry name" value="GreA/GreB_C_sf"/>
</dbReference>
<dbReference type="InterPro" id="IPR018151">
    <property type="entry name" value="TF_GreA/GreB_CS"/>
</dbReference>
<dbReference type="InterPro" id="IPR006359">
    <property type="entry name" value="Tscrpt_elong_fac_GreA"/>
</dbReference>
<dbReference type="InterPro" id="IPR028624">
    <property type="entry name" value="Tscrpt_elong_fac_GreA/B"/>
</dbReference>
<dbReference type="InterPro" id="IPR001437">
    <property type="entry name" value="Tscrpt_elong_fac_GreA/B_C"/>
</dbReference>
<dbReference type="InterPro" id="IPR023459">
    <property type="entry name" value="Tscrpt_elong_fac_GreA/B_fam"/>
</dbReference>
<dbReference type="InterPro" id="IPR022691">
    <property type="entry name" value="Tscrpt_elong_fac_GreA/B_N"/>
</dbReference>
<dbReference type="InterPro" id="IPR036805">
    <property type="entry name" value="Tscrpt_elong_fac_GreA/B_N_sf"/>
</dbReference>
<dbReference type="NCBIfam" id="TIGR01462">
    <property type="entry name" value="greA"/>
    <property type="match status" value="1"/>
</dbReference>
<dbReference type="NCBIfam" id="NF001261">
    <property type="entry name" value="PRK00226.1-2"/>
    <property type="match status" value="1"/>
</dbReference>
<dbReference type="NCBIfam" id="NF001263">
    <property type="entry name" value="PRK00226.1-4"/>
    <property type="match status" value="1"/>
</dbReference>
<dbReference type="PANTHER" id="PTHR30437">
    <property type="entry name" value="TRANSCRIPTION ELONGATION FACTOR GREA"/>
    <property type="match status" value="1"/>
</dbReference>
<dbReference type="PANTHER" id="PTHR30437:SF4">
    <property type="entry name" value="TRANSCRIPTION ELONGATION FACTOR GREA"/>
    <property type="match status" value="1"/>
</dbReference>
<dbReference type="Pfam" id="PF01272">
    <property type="entry name" value="GreA_GreB"/>
    <property type="match status" value="1"/>
</dbReference>
<dbReference type="Pfam" id="PF03449">
    <property type="entry name" value="GreA_GreB_N"/>
    <property type="match status" value="1"/>
</dbReference>
<dbReference type="PIRSF" id="PIRSF006092">
    <property type="entry name" value="GreA_GreB"/>
    <property type="match status" value="1"/>
</dbReference>
<dbReference type="SUPFAM" id="SSF54534">
    <property type="entry name" value="FKBP-like"/>
    <property type="match status" value="1"/>
</dbReference>
<dbReference type="SUPFAM" id="SSF46557">
    <property type="entry name" value="GreA transcript cleavage protein, N-terminal domain"/>
    <property type="match status" value="1"/>
</dbReference>
<dbReference type="PROSITE" id="PS00829">
    <property type="entry name" value="GREAB_1"/>
    <property type="match status" value="1"/>
</dbReference>
<dbReference type="PROSITE" id="PS00830">
    <property type="entry name" value="GREAB_2"/>
    <property type="match status" value="1"/>
</dbReference>
<protein>
    <recommendedName>
        <fullName evidence="1">Transcription elongation factor GreA</fullName>
    </recommendedName>
    <alternativeName>
        <fullName evidence="1">Transcript cleavage factor GreA</fullName>
    </alternativeName>
</protein>
<accession>Q817Z6</accession>
<comment type="function">
    <text evidence="1">Necessary for efficient RNA polymerase transcription elongation past template-encoded arresting sites. The arresting sites in DNA have the property of trapping a certain fraction of elongating RNA polymerases that pass through, resulting in locked ternary complexes. Cleavage of the nascent transcript by cleavage factors such as GreA or GreB allows the resumption of elongation from the new 3'terminus. GreA releases sequences of 2 to 3 nucleotides.</text>
</comment>
<comment type="similarity">
    <text evidence="1">Belongs to the GreA/GreB family.</text>
</comment>
<feature type="chain" id="PRO_0000176907" description="Transcription elongation factor GreA">
    <location>
        <begin position="1"/>
        <end position="158"/>
    </location>
</feature>
<feature type="coiled-coil region" evidence="1">
    <location>
        <begin position="3"/>
        <end position="75"/>
    </location>
</feature>
<reference key="1">
    <citation type="journal article" date="2003" name="Nature">
        <title>Genome sequence of Bacillus cereus and comparative analysis with Bacillus anthracis.</title>
        <authorList>
            <person name="Ivanova N."/>
            <person name="Sorokin A."/>
            <person name="Anderson I."/>
            <person name="Galleron N."/>
            <person name="Candelon B."/>
            <person name="Kapatral V."/>
            <person name="Bhattacharyya A."/>
            <person name="Reznik G."/>
            <person name="Mikhailova N."/>
            <person name="Lapidus A."/>
            <person name="Chu L."/>
            <person name="Mazur M."/>
            <person name="Goltsman E."/>
            <person name="Larsen N."/>
            <person name="D'Souza M."/>
            <person name="Walunas T."/>
            <person name="Grechkin Y."/>
            <person name="Pusch G."/>
            <person name="Haselkorn R."/>
            <person name="Fonstein M."/>
            <person name="Ehrlich S.D."/>
            <person name="Overbeek R."/>
            <person name="Kyrpides N.C."/>
        </authorList>
    </citation>
    <scope>NUCLEOTIDE SEQUENCE [LARGE SCALE GENOMIC DNA]</scope>
    <source>
        <strain>ATCC 14579 / DSM 31 / CCUG 7414 / JCM 2152 / NBRC 15305 / NCIMB 9373 / NCTC 2599 / NRRL B-3711</strain>
    </source>
</reference>
<gene>
    <name evidence="1" type="primary">greA</name>
    <name type="ordered locus">BC_4374</name>
</gene>